<feature type="chain" id="PRO_0000348884" description="tRNA-cytidine(32) 2-sulfurtransferase">
    <location>
        <begin position="1"/>
        <end position="313"/>
    </location>
</feature>
<feature type="region of interest" description="Disordered" evidence="2">
    <location>
        <begin position="288"/>
        <end position="313"/>
    </location>
</feature>
<feature type="short sequence motif" description="PP-loop motif" evidence="1">
    <location>
        <begin position="47"/>
        <end position="52"/>
    </location>
</feature>
<feature type="compositionally biased region" description="Basic and acidic residues" evidence="2">
    <location>
        <begin position="299"/>
        <end position="313"/>
    </location>
</feature>
<feature type="binding site" evidence="1">
    <location>
        <position position="122"/>
    </location>
    <ligand>
        <name>[4Fe-4S] cluster</name>
        <dbReference type="ChEBI" id="CHEBI:49883"/>
    </ligand>
</feature>
<feature type="binding site" evidence="1">
    <location>
        <position position="125"/>
    </location>
    <ligand>
        <name>[4Fe-4S] cluster</name>
        <dbReference type="ChEBI" id="CHEBI:49883"/>
    </ligand>
</feature>
<feature type="binding site" evidence="1">
    <location>
        <position position="213"/>
    </location>
    <ligand>
        <name>[4Fe-4S] cluster</name>
        <dbReference type="ChEBI" id="CHEBI:49883"/>
    </ligand>
</feature>
<proteinExistence type="inferred from homology"/>
<keyword id="KW-0004">4Fe-4S</keyword>
<keyword id="KW-0067">ATP-binding</keyword>
<keyword id="KW-0963">Cytoplasm</keyword>
<keyword id="KW-0408">Iron</keyword>
<keyword id="KW-0411">Iron-sulfur</keyword>
<keyword id="KW-0460">Magnesium</keyword>
<keyword id="KW-0479">Metal-binding</keyword>
<keyword id="KW-0547">Nucleotide-binding</keyword>
<keyword id="KW-0694">RNA-binding</keyword>
<keyword id="KW-0808">Transferase</keyword>
<keyword id="KW-0819">tRNA processing</keyword>
<keyword id="KW-0820">tRNA-binding</keyword>
<name>TTCA_YERPA</name>
<reference key="1">
    <citation type="journal article" date="2006" name="J. Bacteriol.">
        <title>Complete genome sequence of Yersinia pestis strains Antiqua and Nepal516: evidence of gene reduction in an emerging pathogen.</title>
        <authorList>
            <person name="Chain P.S.G."/>
            <person name="Hu P."/>
            <person name="Malfatti S.A."/>
            <person name="Radnedge L."/>
            <person name="Larimer F."/>
            <person name="Vergez L.M."/>
            <person name="Worsham P."/>
            <person name="Chu M.C."/>
            <person name="Andersen G.L."/>
        </authorList>
    </citation>
    <scope>NUCLEOTIDE SEQUENCE [LARGE SCALE GENOMIC DNA]</scope>
    <source>
        <strain>Antiqua</strain>
    </source>
</reference>
<sequence length="313" mass="35799">MLEKQSVNQKEQYNFNKLQKRLRRNVGQAIADFNMIEEGDRVMVCLSGGKDSYTMLDILQSLQKSAPINFSLIAVNLDQKQPGFPEDILPAYLDKQGVEYKIVEENTYGIVKEIIPEGKTTCSLCSRLRRGILYRTATELGATKIALGHHRDDILQTLFLNMFYGGKLKGMPPKLMSDDGKHIVIRPLAYCREKDIERFAVAREYPIIPCNLCGSQPNLQRQVIKDMLRDWDKQYPGRIETMFSAMQNVVPSHLNDHKLFDFKSITHDSDIIDGGDLAFDREALPLNPVGWQPEDDEDTEKRPPVRLDVLEIK</sequence>
<dbReference type="EC" id="2.8.1.-" evidence="1"/>
<dbReference type="EMBL" id="CP000308">
    <property type="protein sequence ID" value="ABG13650.1"/>
    <property type="molecule type" value="Genomic_DNA"/>
</dbReference>
<dbReference type="RefSeq" id="WP_002210992.1">
    <property type="nucleotide sequence ID" value="NZ_CP009906.1"/>
</dbReference>
<dbReference type="SMR" id="Q1C7C2"/>
<dbReference type="GeneID" id="57976339"/>
<dbReference type="KEGG" id="ypa:YPA_1684"/>
<dbReference type="Proteomes" id="UP000001971">
    <property type="component" value="Chromosome"/>
</dbReference>
<dbReference type="GO" id="GO:0005737">
    <property type="term" value="C:cytoplasm"/>
    <property type="evidence" value="ECO:0007669"/>
    <property type="project" value="UniProtKB-SubCell"/>
</dbReference>
<dbReference type="GO" id="GO:0051539">
    <property type="term" value="F:4 iron, 4 sulfur cluster binding"/>
    <property type="evidence" value="ECO:0007669"/>
    <property type="project" value="UniProtKB-UniRule"/>
</dbReference>
<dbReference type="GO" id="GO:0005524">
    <property type="term" value="F:ATP binding"/>
    <property type="evidence" value="ECO:0007669"/>
    <property type="project" value="UniProtKB-UniRule"/>
</dbReference>
<dbReference type="GO" id="GO:0000287">
    <property type="term" value="F:magnesium ion binding"/>
    <property type="evidence" value="ECO:0007669"/>
    <property type="project" value="UniProtKB-UniRule"/>
</dbReference>
<dbReference type="GO" id="GO:0016783">
    <property type="term" value="F:sulfurtransferase activity"/>
    <property type="evidence" value="ECO:0007669"/>
    <property type="project" value="UniProtKB-UniRule"/>
</dbReference>
<dbReference type="GO" id="GO:0000049">
    <property type="term" value="F:tRNA binding"/>
    <property type="evidence" value="ECO:0007669"/>
    <property type="project" value="UniProtKB-KW"/>
</dbReference>
<dbReference type="GO" id="GO:0034227">
    <property type="term" value="P:tRNA thio-modification"/>
    <property type="evidence" value="ECO:0007669"/>
    <property type="project" value="UniProtKB-UniRule"/>
</dbReference>
<dbReference type="CDD" id="cd24138">
    <property type="entry name" value="TtcA-like"/>
    <property type="match status" value="1"/>
</dbReference>
<dbReference type="Gene3D" id="3.40.50.620">
    <property type="entry name" value="HUPs"/>
    <property type="match status" value="1"/>
</dbReference>
<dbReference type="HAMAP" id="MF_01850">
    <property type="entry name" value="TtcA"/>
    <property type="match status" value="1"/>
</dbReference>
<dbReference type="InterPro" id="IPR014729">
    <property type="entry name" value="Rossmann-like_a/b/a_fold"/>
</dbReference>
<dbReference type="InterPro" id="IPR011063">
    <property type="entry name" value="TilS/TtcA_N"/>
</dbReference>
<dbReference type="InterPro" id="IPR012089">
    <property type="entry name" value="tRNA_Cyd_32_2_STrfase"/>
</dbReference>
<dbReference type="InterPro" id="IPR035107">
    <property type="entry name" value="tRNA_thiolation_TtcA_Ctu1"/>
</dbReference>
<dbReference type="NCBIfam" id="NF007972">
    <property type="entry name" value="PRK10696.1"/>
    <property type="match status" value="1"/>
</dbReference>
<dbReference type="PANTHER" id="PTHR43686:SF1">
    <property type="entry name" value="AMINOTRAN_5 DOMAIN-CONTAINING PROTEIN"/>
    <property type="match status" value="1"/>
</dbReference>
<dbReference type="PANTHER" id="PTHR43686">
    <property type="entry name" value="SULFURTRANSFERASE-RELATED"/>
    <property type="match status" value="1"/>
</dbReference>
<dbReference type="Pfam" id="PF01171">
    <property type="entry name" value="ATP_bind_3"/>
    <property type="match status" value="1"/>
</dbReference>
<dbReference type="PIRSF" id="PIRSF004976">
    <property type="entry name" value="ATPase_YdaO"/>
    <property type="match status" value="1"/>
</dbReference>
<dbReference type="SUPFAM" id="SSF52402">
    <property type="entry name" value="Adenine nucleotide alpha hydrolases-like"/>
    <property type="match status" value="1"/>
</dbReference>
<comment type="function">
    <text evidence="1">Catalyzes the ATP-dependent 2-thiolation of cytidine in position 32 of tRNA, to form 2-thiocytidine (s(2)C32). The sulfur atoms are provided by the cysteine/cysteine desulfurase (IscS) system.</text>
</comment>
<comment type="catalytic activity">
    <reaction evidence="1">
        <text>cytidine(32) in tRNA + S-sulfanyl-L-cysteinyl-[cysteine desulfurase] + AH2 + ATP = 2-thiocytidine(32) in tRNA + L-cysteinyl-[cysteine desulfurase] + A + AMP + diphosphate + H(+)</text>
        <dbReference type="Rhea" id="RHEA:57048"/>
        <dbReference type="Rhea" id="RHEA-COMP:10288"/>
        <dbReference type="Rhea" id="RHEA-COMP:12157"/>
        <dbReference type="Rhea" id="RHEA-COMP:12158"/>
        <dbReference type="Rhea" id="RHEA-COMP:14821"/>
        <dbReference type="ChEBI" id="CHEBI:13193"/>
        <dbReference type="ChEBI" id="CHEBI:15378"/>
        <dbReference type="ChEBI" id="CHEBI:17499"/>
        <dbReference type="ChEBI" id="CHEBI:29950"/>
        <dbReference type="ChEBI" id="CHEBI:30616"/>
        <dbReference type="ChEBI" id="CHEBI:33019"/>
        <dbReference type="ChEBI" id="CHEBI:61963"/>
        <dbReference type="ChEBI" id="CHEBI:82748"/>
        <dbReference type="ChEBI" id="CHEBI:141453"/>
        <dbReference type="ChEBI" id="CHEBI:456215"/>
    </reaction>
    <physiologicalReaction direction="left-to-right" evidence="1">
        <dbReference type="Rhea" id="RHEA:57049"/>
    </physiologicalReaction>
</comment>
<comment type="cofactor">
    <cofactor evidence="1">
        <name>Mg(2+)</name>
        <dbReference type="ChEBI" id="CHEBI:18420"/>
    </cofactor>
</comment>
<comment type="cofactor">
    <cofactor evidence="1">
        <name>[4Fe-4S] cluster</name>
        <dbReference type="ChEBI" id="CHEBI:49883"/>
    </cofactor>
    <text evidence="1">Binds 1 [4Fe-4S] cluster per subunit. The cluster is chelated by three Cys residues, the fourth Fe has a free coordination site that may bind a sulfur atom transferred from the persulfide of IscS.</text>
</comment>
<comment type="pathway">
    <text evidence="1">tRNA modification.</text>
</comment>
<comment type="subunit">
    <text evidence="1">Homodimer.</text>
</comment>
<comment type="subcellular location">
    <subcellularLocation>
        <location evidence="1">Cytoplasm</location>
    </subcellularLocation>
</comment>
<comment type="miscellaneous">
    <text evidence="1">The thiolation reaction likely consists of two steps: a first activation step by ATP to form an adenylated intermediate of the target base of tRNA, and a second nucleophilic substitution step of the sulfur (S) atom supplied by the hydrosulfide attached to the Fe-S cluster.</text>
</comment>
<comment type="similarity">
    <text evidence="1">Belongs to the TtcA family.</text>
</comment>
<protein>
    <recommendedName>
        <fullName evidence="1">tRNA-cytidine(32) 2-sulfurtransferase</fullName>
        <ecNumber evidence="1">2.8.1.-</ecNumber>
    </recommendedName>
    <alternativeName>
        <fullName evidence="1">Two-thiocytidine biosynthesis protein A</fullName>
    </alternativeName>
    <alternativeName>
        <fullName evidence="1">tRNA 2-thiocytidine biosynthesis protein TtcA</fullName>
    </alternativeName>
</protein>
<accession>Q1C7C2</accession>
<gene>
    <name evidence="1" type="primary">ttcA</name>
    <name type="ordered locus">YPA_1684</name>
</gene>
<evidence type="ECO:0000255" key="1">
    <source>
        <dbReference type="HAMAP-Rule" id="MF_01850"/>
    </source>
</evidence>
<evidence type="ECO:0000256" key="2">
    <source>
        <dbReference type="SAM" id="MobiDB-lite"/>
    </source>
</evidence>
<organism>
    <name type="scientific">Yersinia pestis bv. Antiqua (strain Antiqua)</name>
    <dbReference type="NCBI Taxonomy" id="360102"/>
    <lineage>
        <taxon>Bacteria</taxon>
        <taxon>Pseudomonadati</taxon>
        <taxon>Pseudomonadota</taxon>
        <taxon>Gammaproteobacteria</taxon>
        <taxon>Enterobacterales</taxon>
        <taxon>Yersiniaceae</taxon>
        <taxon>Yersinia</taxon>
    </lineage>
</organism>